<comment type="subcellular location">
    <subcellularLocation>
        <location evidence="2">Membrane</location>
        <topology evidence="2">Single-pass membrane protein</topology>
    </subcellularLocation>
</comment>
<sequence length="228" mass="25121">MSYVFINDSSQTSVPLLQACIDGDLSFARRLLETGCDPNIRDHRGRTGLHLAAARGNVDICRFLHKFGADLLATDYQGNTALHLCGHVDTIQFLVSNGLKIDICNHNGSTPLVLAKRRGVNKDAIRLLEGLEEQEVKGFNRGAHSKLEAMQMAESESAMESHSLLNPNLQNSEGVLSSFRSTWQEFVEDLGFWRVLLLLVVIALLSLGIAYYVSGVLPFSASQLELVH</sequence>
<feature type="chain" id="PRO_0000244581" description="Ankyrin repeat domain-containing protein 46">
    <location>
        <begin position="1"/>
        <end position="228"/>
    </location>
</feature>
<feature type="transmembrane region" description="Helical" evidence="1">
    <location>
        <begin position="195"/>
        <end position="215"/>
    </location>
</feature>
<feature type="repeat" description="ANK 1">
    <location>
        <begin position="11"/>
        <end position="40"/>
    </location>
</feature>
<feature type="repeat" description="ANK 2">
    <location>
        <begin position="44"/>
        <end position="73"/>
    </location>
</feature>
<feature type="repeat" description="ANK 3">
    <location>
        <begin position="77"/>
        <end position="103"/>
    </location>
</feature>
<feature type="repeat" description="ANK 4">
    <location>
        <begin position="107"/>
        <end position="138"/>
    </location>
</feature>
<feature type="sequence conflict" description="In Ref. 2; AAH94966." evidence="2" ref="2">
    <original>E</original>
    <variation>G</variation>
    <location>
        <position position="160"/>
    </location>
</feature>
<protein>
    <recommendedName>
        <fullName>Ankyrin repeat domain-containing protein 46</fullName>
    </recommendedName>
</protein>
<name>ANR46_DANRE</name>
<reference key="1">
    <citation type="journal article" date="2004" name="Proc. Natl. Acad. Sci. U.S.A.">
        <title>Hematopoietic gene expression profile in zebrafish kidney marrow.</title>
        <authorList>
            <person name="Song H.-D."/>
            <person name="Sun X.-J."/>
            <person name="Deng M."/>
            <person name="Zhang G.-W."/>
            <person name="Zhou Y."/>
            <person name="Wu X.-Y."/>
            <person name="Sheng Y."/>
            <person name="Chen Y."/>
            <person name="Ruan Z."/>
            <person name="Jiang C.-L."/>
            <person name="Fan H.-Y."/>
            <person name="Zon L.I."/>
            <person name="Kanki J.P."/>
            <person name="Liu T.X."/>
            <person name="Look A.T."/>
            <person name="Chen Z."/>
        </authorList>
    </citation>
    <scope>NUCLEOTIDE SEQUENCE [LARGE SCALE MRNA]</scope>
    <source>
        <tissue>Kidney marrow</tissue>
    </source>
</reference>
<reference key="2">
    <citation type="submission" date="2005-05" db="EMBL/GenBank/DDBJ databases">
        <authorList>
            <consortium name="NIH - Zebrafish Gene Collection (ZGC) project"/>
        </authorList>
    </citation>
    <scope>NUCLEOTIDE SEQUENCE [LARGE SCALE MRNA]</scope>
    <source>
        <tissue>Brain</tissue>
    </source>
</reference>
<dbReference type="EMBL" id="AY391435">
    <property type="protein sequence ID" value="AAQ91247.1"/>
    <property type="molecule type" value="mRNA"/>
</dbReference>
<dbReference type="EMBL" id="BC094966">
    <property type="protein sequence ID" value="AAH94966.1"/>
    <property type="molecule type" value="mRNA"/>
</dbReference>
<dbReference type="RefSeq" id="NP_991159.1">
    <property type="nucleotide sequence ID" value="NM_205596.1"/>
</dbReference>
<dbReference type="RefSeq" id="XP_005166560.1">
    <property type="nucleotide sequence ID" value="XM_005166503.2"/>
</dbReference>
<dbReference type="SMR" id="Q6TNT2"/>
<dbReference type="STRING" id="7955.ENSDARP00000020125"/>
<dbReference type="PaxDb" id="7955-ENSDARP00000020125"/>
<dbReference type="Ensembl" id="ENSDART00000022918">
    <property type="protein sequence ID" value="ENSDARP00000020125"/>
    <property type="gene ID" value="ENSDARG00000015780"/>
</dbReference>
<dbReference type="Ensembl" id="ENSDART00000160398">
    <property type="protein sequence ID" value="ENSDARP00000133092"/>
    <property type="gene ID" value="ENSDARG00000015780"/>
</dbReference>
<dbReference type="GeneID" id="402888"/>
<dbReference type="KEGG" id="dre:402888"/>
<dbReference type="AGR" id="ZFIN:ZDB-GENE-050114-7"/>
<dbReference type="CTD" id="402888"/>
<dbReference type="ZFIN" id="ZDB-GENE-050114-7">
    <property type="gene designation" value="ankrd46b"/>
</dbReference>
<dbReference type="eggNOG" id="KOG0508">
    <property type="taxonomic scope" value="Eukaryota"/>
</dbReference>
<dbReference type="HOGENOM" id="CLU_084801_0_0_1"/>
<dbReference type="InParanoid" id="Q6TNT2"/>
<dbReference type="OMA" id="EYQGNTA"/>
<dbReference type="OrthoDB" id="21416at2759"/>
<dbReference type="PhylomeDB" id="Q6TNT2"/>
<dbReference type="TreeFam" id="TF330790"/>
<dbReference type="Reactome" id="R-DRE-9843970">
    <property type="pathway name" value="Regulation of endogenous retroelements by the Human Silencing Hub (HUSH) complex"/>
</dbReference>
<dbReference type="PRO" id="PR:Q6TNT2"/>
<dbReference type="Proteomes" id="UP000000437">
    <property type="component" value="Chromosome 7"/>
</dbReference>
<dbReference type="Bgee" id="ENSDARG00000015780">
    <property type="expression patterns" value="Expressed in brain and 27 other cell types or tissues"/>
</dbReference>
<dbReference type="GO" id="GO:0016020">
    <property type="term" value="C:membrane"/>
    <property type="evidence" value="ECO:0007669"/>
    <property type="project" value="UniProtKB-SubCell"/>
</dbReference>
<dbReference type="Gene3D" id="1.25.40.20">
    <property type="entry name" value="Ankyrin repeat-containing domain"/>
    <property type="match status" value="1"/>
</dbReference>
<dbReference type="InterPro" id="IPR002110">
    <property type="entry name" value="Ankyrin_rpt"/>
</dbReference>
<dbReference type="InterPro" id="IPR036770">
    <property type="entry name" value="Ankyrin_rpt-contain_sf"/>
</dbReference>
<dbReference type="PANTHER" id="PTHR24171:SF9">
    <property type="entry name" value="ANKYRIN REPEAT DOMAIN-CONTAINING PROTEIN 39"/>
    <property type="match status" value="1"/>
</dbReference>
<dbReference type="PANTHER" id="PTHR24171">
    <property type="entry name" value="ANKYRIN REPEAT DOMAIN-CONTAINING PROTEIN 39-RELATED"/>
    <property type="match status" value="1"/>
</dbReference>
<dbReference type="Pfam" id="PF12796">
    <property type="entry name" value="Ank_2"/>
    <property type="match status" value="1"/>
</dbReference>
<dbReference type="SMART" id="SM00248">
    <property type="entry name" value="ANK"/>
    <property type="match status" value="3"/>
</dbReference>
<dbReference type="SUPFAM" id="SSF48403">
    <property type="entry name" value="Ankyrin repeat"/>
    <property type="match status" value="1"/>
</dbReference>
<dbReference type="PROSITE" id="PS50297">
    <property type="entry name" value="ANK_REP_REGION"/>
    <property type="match status" value="1"/>
</dbReference>
<dbReference type="PROSITE" id="PS50088">
    <property type="entry name" value="ANK_REPEAT"/>
    <property type="match status" value="2"/>
</dbReference>
<proteinExistence type="evidence at transcript level"/>
<gene>
    <name type="primary">ankrd46</name>
    <name type="ORF">zgc:109722</name>
</gene>
<keyword id="KW-0040">ANK repeat</keyword>
<keyword id="KW-0472">Membrane</keyword>
<keyword id="KW-1185">Reference proteome</keyword>
<keyword id="KW-0677">Repeat</keyword>
<keyword id="KW-0812">Transmembrane</keyword>
<keyword id="KW-1133">Transmembrane helix</keyword>
<evidence type="ECO:0000255" key="1"/>
<evidence type="ECO:0000305" key="2"/>
<accession>Q6TNT2</accession>
<accession>Q504K9</accession>
<organism>
    <name type="scientific">Danio rerio</name>
    <name type="common">Zebrafish</name>
    <name type="synonym">Brachydanio rerio</name>
    <dbReference type="NCBI Taxonomy" id="7955"/>
    <lineage>
        <taxon>Eukaryota</taxon>
        <taxon>Metazoa</taxon>
        <taxon>Chordata</taxon>
        <taxon>Craniata</taxon>
        <taxon>Vertebrata</taxon>
        <taxon>Euteleostomi</taxon>
        <taxon>Actinopterygii</taxon>
        <taxon>Neopterygii</taxon>
        <taxon>Teleostei</taxon>
        <taxon>Ostariophysi</taxon>
        <taxon>Cypriniformes</taxon>
        <taxon>Danionidae</taxon>
        <taxon>Danioninae</taxon>
        <taxon>Danio</taxon>
    </lineage>
</organism>